<reference key="1">
    <citation type="journal article" date="1991" name="Proc. Natl. Acad. Sci. U.S.A.">
        <title>Cloning and molecular characterization of the murine macrophage '68-kDa' protein kinase C substrate and its regulation by bacterial lipopolysaccharide.</title>
        <authorList>
            <person name="Seykora J.T."/>
            <person name="Ravetch J.V."/>
            <person name="Aderem A."/>
        </authorList>
    </citation>
    <scope>NUCLEOTIDE SEQUENCE [MRNA]</scope>
    <scope>TISSUE SPECIFICITY</scope>
    <scope>INDUCTION BY LPS</scope>
    <source>
        <tissue>Macrophage</tissue>
    </source>
</reference>
<reference key="2">
    <citation type="journal article" date="1991" name="EMBO J.">
        <title>Protein kinase C activation potently down-regulates the expression of its major substrate, 80K, in Swiss 3T3 cells.</title>
        <authorList>
            <person name="Brooks S.F."/>
            <person name="Herget T."/>
            <person name="Erusalimsky J.D."/>
            <person name="Rozengurt E."/>
        </authorList>
    </citation>
    <scope>NUCLEOTIDE SEQUENCE [MRNA]</scope>
    <scope>PARTIAL PROTEIN SEQUENCE</scope>
    <source>
        <tissue>Fibroblast</tissue>
    </source>
</reference>
<reference key="3">
    <citation type="journal article" date="2004" name="Genome Res.">
        <title>The status, quality, and expansion of the NIH full-length cDNA project: the Mammalian Gene Collection (MGC).</title>
        <authorList>
            <consortium name="The MGC Project Team"/>
        </authorList>
    </citation>
    <scope>NUCLEOTIDE SEQUENCE [LARGE SCALE MRNA]</scope>
    <source>
        <tissue>Olfactory epithelium</tissue>
    </source>
</reference>
<reference key="4">
    <citation type="submission" date="2007-04" db="UniProtKB">
        <authorList>
            <person name="Lubec G."/>
            <person name="Kang S.U."/>
        </authorList>
    </citation>
    <scope>PROTEIN SEQUENCE OF 131-145 AND 170-186</scope>
    <scope>IDENTIFICATION BY MASS SPECTROMETRY</scope>
    <source>
        <strain>C57BL/6J</strain>
        <tissue>Brain</tissue>
    </source>
</reference>
<reference key="5">
    <citation type="journal article" date="1990" name="FEBS Lett.">
        <title>Purification and internal amino acid sequence of the 80 kDa protein kinase C substrate from Swiss 3T3 fibroblasts. Homology with substrates from brain.</title>
        <authorList>
            <person name="Brooks S.F."/>
            <person name="Erusalimsky J.D."/>
            <person name="Totty N.F."/>
            <person name="Rozengurt E."/>
        </authorList>
    </citation>
    <scope>PARTIAL PROTEIN SEQUENCE</scope>
    <source>
        <strain>SWR/J</strain>
        <tissue>Fibroblast</tissue>
    </source>
</reference>
<reference key="6">
    <citation type="journal article" date="1996" name="FEBS Lett.">
        <title>p42 MAPK phosphorylates 80 kDa MARCKS at Ser-113.</title>
        <authorList>
            <person name="Schoenwasser D.C."/>
            <person name="Palmer R.H."/>
            <person name="Herget T."/>
            <person name="Parker P.J."/>
        </authorList>
    </citation>
    <scope>PROTEIN SEQUENCE OF 102-130</scope>
    <scope>PHOSPHORYLATION AT SER-113</scope>
    <scope>MUTAGENESIS OF SER-113</scope>
</reference>
<reference key="7">
    <citation type="journal article" date="1992" name="Eur. J. Biochem.">
        <title>Relationship between the major protein kinase C substrates acidic 80-kDa protein-kinase-C substrate (80K) and myristoylated alanine-rich C-kinase substrate (MARCKS). Members of a gene family or equivalent genes in different species.</title>
        <authorList>
            <person name="Herget T."/>
            <person name="Brooks S.F."/>
            <person name="Broad S."/>
            <person name="Rozengurt E."/>
        </authorList>
    </citation>
    <scope>NUCLEOTIDE SEQUENCE [MRNA] OF 182-301</scope>
</reference>
<reference key="8">
    <citation type="journal article" date="1995" name="Eur. J. Biochem.">
        <title>The myristoylated alanine-rich C-kinase substrate (MARCKS) is sequentially phosphorylated by conventional, novel and atypical isotypes of protein kinase C.</title>
        <authorList>
            <person name="Herget T."/>
            <person name="Oehrlein S.A."/>
            <person name="Pappin D.J.C."/>
            <person name="Rozengurt E."/>
            <person name="Parker P.J."/>
        </authorList>
    </citation>
    <scope>PHOSPHORYLATION AT SER-152; SER-156 AND SER-163</scope>
</reference>
<reference key="9">
    <citation type="journal article" date="1996" name="Proc. Natl. Acad. Sci. U.S.A.">
        <title>Neural tube defects and abnormal brain development in F52-deficient mice.</title>
        <authorList>
            <person name="Wu M."/>
            <person name="Chen D.F."/>
            <person name="Sasaoka T."/>
            <person name="Tonegawa S."/>
        </authorList>
    </citation>
    <scope>FUNCTION</scope>
    <scope>DISRUPTION PHENOTYPE</scope>
</reference>
<reference key="10">
    <citation type="journal article" date="2004" name="Mol. Cell. Proteomics">
        <title>Phosphoproteomic analysis of the developing mouse brain.</title>
        <authorList>
            <person name="Ballif B.A."/>
            <person name="Villen J."/>
            <person name="Beausoleil S.A."/>
            <person name="Schwartz D."/>
            <person name="Gygi S.P."/>
        </authorList>
    </citation>
    <scope>PHOSPHORYLATION [LARGE SCALE ANALYSIS] AT SER-46 AND SER-246</scope>
    <scope>IDENTIFICATION BY MASS SPECTROMETRY [LARGE SCALE ANALYSIS]</scope>
    <source>
        <tissue>Embryonic brain</tissue>
    </source>
</reference>
<reference key="11">
    <citation type="journal article" date="2007" name="Proc. Natl. Acad. Sci. U.S.A.">
        <title>Large-scale phosphorylation analysis of mouse liver.</title>
        <authorList>
            <person name="Villen J."/>
            <person name="Beausoleil S.A."/>
            <person name="Gerber S.A."/>
            <person name="Gygi S.P."/>
        </authorList>
    </citation>
    <scope>IDENTIFICATION BY MASS SPECTROMETRY [LARGE SCALE ANALYSIS]</scope>
    <source>
        <tissue>Liver</tissue>
    </source>
</reference>
<reference key="12">
    <citation type="journal article" date="2009" name="Mol. Cell. Proteomics">
        <title>Large scale localization of protein phosphorylation by use of electron capture dissociation mass spectrometry.</title>
        <authorList>
            <person name="Sweet S.M."/>
            <person name="Bailey C.M."/>
            <person name="Cunningham D.L."/>
            <person name="Heath J.K."/>
            <person name="Cooper H.J."/>
        </authorList>
    </citation>
    <scope>PHOSPHORYLATION [LARGE SCALE ANALYSIS] AT SER-163</scope>
    <scope>IDENTIFICATION BY MASS SPECTROMETRY [LARGE SCALE ANALYSIS]</scope>
    <source>
        <tissue>Embryonic fibroblast</tissue>
    </source>
</reference>
<reference key="13">
    <citation type="journal article" date="2010" name="Cell">
        <title>A tissue-specific atlas of mouse protein phosphorylation and expression.</title>
        <authorList>
            <person name="Huttlin E.L."/>
            <person name="Jedrychowski M.P."/>
            <person name="Elias J.E."/>
            <person name="Goswami T."/>
            <person name="Rad R."/>
            <person name="Beausoleil S.A."/>
            <person name="Villen J."/>
            <person name="Haas W."/>
            <person name="Sowa M.E."/>
            <person name="Gygi S.P."/>
        </authorList>
    </citation>
    <scope>PHOSPHORYLATION [LARGE SCALE ANALYSIS] AT THR-15; SER-27; SER-46; SER-138; SER-140; SER-141; THR-143 AND SER-171</scope>
    <scope>IDENTIFICATION BY MASS SPECTROMETRY [LARGE SCALE ANALYSIS]</scope>
    <source>
        <tissue>Brain</tissue>
        <tissue>Brown adipose tissue</tissue>
        <tissue>Heart</tissue>
        <tissue>Kidney</tissue>
        <tissue>Liver</tissue>
        <tissue>Lung</tissue>
        <tissue>Pancreas</tissue>
        <tissue>Spleen</tissue>
        <tissue>Testis</tissue>
    </source>
</reference>
<reference key="14">
    <citation type="journal article" date="2010" name="Exp. Lung Res.">
        <title>Inhibition of myristoylated alanine-rich C kinase substrate (MARCKS) protein inhibits ozone-induced airway neutrophilia and inflammation.</title>
        <authorList>
            <person name="Damera G."/>
            <person name="Jester W.F."/>
            <person name="Jiang M."/>
            <person name="Zhao H."/>
            <person name="Fogle H.W."/>
            <person name="Mittelman M."/>
            <person name="Haczku A."/>
            <person name="Murphy E."/>
            <person name="Parikh I."/>
            <person name="Panettieri R.A. Jr."/>
        </authorList>
    </citation>
    <scope>FUNCTION</scope>
</reference>
<reference key="15">
    <citation type="journal article" date="2018" name="Sci. Rep.">
        <title>MARCKS regulates neuritogenesis and interacts with a CDC42 signaling network.</title>
        <authorList>
            <person name="Brudvig J.J."/>
            <person name="Cain J.T."/>
            <person name="Sears R.M."/>
            <person name="Schmidt-Grimminger G.G."/>
            <person name="Wittchen E.S."/>
            <person name="Adler K.B."/>
            <person name="Ghashghaei H.T."/>
            <person name="Weimer J.M."/>
        </authorList>
    </citation>
    <scope>FUNCTION</scope>
    <scope>SUBCELLULAR LOCATION</scope>
    <scope>INTERACTION WITH CDC42</scope>
</reference>
<reference key="16">
    <citation type="journal article" date="2019" name="Nat. Commun.">
        <title>Tip60- and sirtuin 2-regulated MARCKS acetylation and phosphorylation are required for diabetic embryopathy.</title>
        <authorList>
            <person name="Yang P."/>
            <person name="Xu C."/>
            <person name="Reece E.A."/>
            <person name="Chen X."/>
            <person name="Zhong J."/>
            <person name="Zhan M."/>
            <person name="Stumpo D.J."/>
            <person name="Blackshear P.J."/>
            <person name="Yang P."/>
        </authorList>
    </citation>
    <scope>FUNCTION</scope>
    <scope>ACETYLATION AT LYS-165</scope>
    <scope>MUTAGENESIS OF LYS-165</scope>
    <scope>SUBCELLULAR LOCATION</scope>
</reference>
<reference key="17">
    <citation type="journal article" date="2003" name="Nat. Struct. Biol.">
        <title>Crystal structure of a MARCKS peptide containing the calmodulin-binding domain in complex with Ca2+-calmodulin.</title>
        <authorList>
            <person name="Yamauchi E."/>
            <person name="Nakatsu T."/>
            <person name="Matsubara M."/>
            <person name="Kato H."/>
            <person name="Taniguchi H."/>
        </authorList>
    </citation>
    <scope>X-RAY CRYSTALLOGRAPHY (2.0 ANGSTROMS) OF 148-166 IN COMPLEX WITH CALMODULIN</scope>
    <scope>REGION</scope>
</reference>
<name>MARCS_MOUSE</name>
<proteinExistence type="evidence at protein level"/>
<accession>P26645</accession>
<feature type="initiator methionine" description="Removed" evidence="1">
    <location>
        <position position="1"/>
    </location>
</feature>
<feature type="chain" id="PRO_0000157149" description="Myristoylated alanine-rich C-kinase substrate">
    <location>
        <begin position="2"/>
        <end position="309"/>
    </location>
</feature>
<feature type="region of interest" description="Disordered" evidence="4">
    <location>
        <begin position="1"/>
        <end position="309"/>
    </location>
</feature>
<feature type="region of interest" description="Calmodulin-binding (PSD)" evidence="5">
    <location>
        <begin position="145"/>
        <end position="169"/>
    </location>
</feature>
<feature type="compositionally biased region" description="Polar residues" evidence="4">
    <location>
        <begin position="26"/>
        <end position="35"/>
    </location>
</feature>
<feature type="compositionally biased region" description="Low complexity" evidence="4">
    <location>
        <begin position="73"/>
        <end position="82"/>
    </location>
</feature>
<feature type="compositionally biased region" description="Low complexity" evidence="4">
    <location>
        <begin position="89"/>
        <end position="98"/>
    </location>
</feature>
<feature type="compositionally biased region" description="Low complexity" evidence="4">
    <location>
        <begin position="109"/>
        <end position="142"/>
    </location>
</feature>
<feature type="compositionally biased region" description="Basic residues" evidence="4">
    <location>
        <begin position="145"/>
        <end position="157"/>
    </location>
</feature>
<feature type="compositionally biased region" description="Low complexity" evidence="4">
    <location>
        <begin position="190"/>
        <end position="203"/>
    </location>
</feature>
<feature type="compositionally biased region" description="Gly residues" evidence="4">
    <location>
        <begin position="204"/>
        <end position="215"/>
    </location>
</feature>
<feature type="compositionally biased region" description="Low complexity" evidence="4">
    <location>
        <begin position="256"/>
        <end position="290"/>
    </location>
</feature>
<feature type="compositionally biased region" description="Pro residues" evidence="4">
    <location>
        <begin position="291"/>
        <end position="309"/>
    </location>
</feature>
<feature type="modified residue" description="Phosphothreonine" evidence="16">
    <location>
        <position position="15"/>
    </location>
</feature>
<feature type="modified residue" description="Phosphoserine" evidence="2">
    <location>
        <position position="26"/>
    </location>
</feature>
<feature type="modified residue" description="Phosphoserine" evidence="16">
    <location>
        <position position="27"/>
    </location>
</feature>
<feature type="modified residue" description="Phosphoserine" evidence="2">
    <location>
        <position position="29"/>
    </location>
</feature>
<feature type="modified residue" description="Phosphoserine" evidence="14 16">
    <location>
        <position position="46"/>
    </location>
</feature>
<feature type="modified residue" description="Phosphoserine" evidence="2">
    <location>
        <position position="63"/>
    </location>
</feature>
<feature type="modified residue" description="Phosphoserine" evidence="3">
    <location>
        <position position="74"/>
    </location>
</feature>
<feature type="modified residue" description="Phosphothreonine" evidence="3">
    <location>
        <position position="79"/>
    </location>
</feature>
<feature type="modified residue" description="Phosphoserine; by MAPK" evidence="12">
    <location>
        <position position="113"/>
    </location>
</feature>
<feature type="modified residue" description="Phosphoserine" evidence="3">
    <location>
        <position position="122"/>
    </location>
</feature>
<feature type="modified residue" description="Phosphoserine" evidence="1">
    <location>
        <position position="128"/>
    </location>
</feature>
<feature type="modified residue" description="Phosphoserine" evidence="16">
    <location>
        <position position="138"/>
    </location>
</feature>
<feature type="modified residue" description="Phosphoserine" evidence="16">
    <location>
        <position position="140"/>
    </location>
</feature>
<feature type="modified residue" description="Phosphoserine" evidence="16">
    <location>
        <position position="141"/>
    </location>
</feature>
<feature type="modified residue" description="Phosphothreonine" evidence="16">
    <location>
        <position position="143"/>
    </location>
</feature>
<feature type="modified residue" description="Phosphoserine; by PKC" evidence="10">
    <location>
        <position position="152"/>
    </location>
</feature>
<feature type="modified residue" description="Phosphoserine; by PKC" evidence="10">
    <location>
        <position position="156"/>
    </location>
</feature>
<feature type="modified residue" description="Phosphoserine" evidence="1">
    <location>
        <position position="160"/>
    </location>
</feature>
<feature type="modified residue" description="Phosphoserine; by PKC" evidence="10 15">
    <location>
        <position position="163"/>
    </location>
</feature>
<feature type="modified residue" description="N6-acetyllysine" evidence="9">
    <location>
        <position position="165"/>
    </location>
</feature>
<feature type="modified residue" description="Phosphoserine" evidence="16">
    <location>
        <position position="171"/>
    </location>
</feature>
<feature type="modified residue" description="Phosphoserine" evidence="14">
    <location>
        <position position="246"/>
    </location>
</feature>
<feature type="modified residue" description="Phosphoserine" evidence="2">
    <location>
        <position position="291"/>
    </location>
</feature>
<feature type="lipid moiety-binding region" description="N-myristoyl glycine" evidence="2">
    <location>
        <position position="2"/>
    </location>
</feature>
<feature type="mutagenesis site" description="Poorly phosphorylated." evidence="12">
    <original>S</original>
    <variation>A</variation>
    <location>
        <position position="113"/>
    </location>
</feature>
<feature type="mutagenesis site" description="Strong loss of acetylation." evidence="9">
    <original>K</original>
    <variation>A</variation>
    <location>
        <position position="165"/>
    </location>
</feature>
<feature type="sequence conflict" description="In Ref. 2; AA sequence." evidence="13" ref="2">
    <original>AGA</original>
    <variation>TGT</variation>
    <location>
        <begin position="96"/>
        <end position="98"/>
    </location>
</feature>
<feature type="helix" evidence="17">
    <location>
        <begin position="157"/>
        <end position="162"/>
    </location>
</feature>
<keyword id="KW-0002">3D-structure</keyword>
<keyword id="KW-0007">Acetylation</keyword>
<keyword id="KW-0009">Actin-binding</keyword>
<keyword id="KW-0112">Calmodulin-binding</keyword>
<keyword id="KW-1003">Cell membrane</keyword>
<keyword id="KW-0963">Cytoplasm</keyword>
<keyword id="KW-0206">Cytoskeleton</keyword>
<keyword id="KW-0903">Direct protein sequencing</keyword>
<keyword id="KW-0449">Lipoprotein</keyword>
<keyword id="KW-0472">Membrane</keyword>
<keyword id="KW-0519">Myristate</keyword>
<keyword id="KW-0597">Phosphoprotein</keyword>
<keyword id="KW-1185">Reference proteome</keyword>
<dbReference type="EMBL" id="M60474">
    <property type="protein sequence ID" value="AAA39491.1"/>
    <property type="molecule type" value="mRNA"/>
</dbReference>
<dbReference type="EMBL" id="BC046601">
    <property type="protein sequence ID" value="AAH46601.1"/>
    <property type="molecule type" value="mRNA"/>
</dbReference>
<dbReference type="CCDS" id="CCDS23784.1"/>
<dbReference type="PIR" id="A39169">
    <property type="entry name" value="A39169"/>
</dbReference>
<dbReference type="RefSeq" id="NP_032564.1">
    <property type="nucleotide sequence ID" value="NM_008538.2"/>
</dbReference>
<dbReference type="PDB" id="1IWQ">
    <property type="method" value="X-ray"/>
    <property type="resolution" value="2.00 A"/>
    <property type="chains" value="B=148-166"/>
</dbReference>
<dbReference type="PDBsum" id="1IWQ"/>
<dbReference type="BioGRID" id="201268">
    <property type="interactions" value="20"/>
</dbReference>
<dbReference type="FunCoup" id="P26645">
    <property type="interactions" value="894"/>
</dbReference>
<dbReference type="IntAct" id="P26645">
    <property type="interactions" value="4"/>
</dbReference>
<dbReference type="MINT" id="P26645"/>
<dbReference type="STRING" id="10090.ENSMUSP00000090245"/>
<dbReference type="GlyGen" id="P26645">
    <property type="glycosylation" value="2 sites"/>
</dbReference>
<dbReference type="iPTMnet" id="P26645"/>
<dbReference type="PhosphoSitePlus" id="P26645"/>
<dbReference type="SwissPalm" id="P26645"/>
<dbReference type="CPTAC" id="non-CPTAC-4045"/>
<dbReference type="jPOST" id="P26645"/>
<dbReference type="PaxDb" id="10090-ENSMUSP00000090245"/>
<dbReference type="PeptideAtlas" id="P26645"/>
<dbReference type="ProteomicsDB" id="287311"/>
<dbReference type="Pumba" id="P26645"/>
<dbReference type="TopDownProteomics" id="P26645"/>
<dbReference type="Antibodypedia" id="72851">
    <property type="antibodies" value="903 antibodies from 42 providers"/>
</dbReference>
<dbReference type="DNASU" id="17118"/>
<dbReference type="Ensembl" id="ENSMUST00000092584.6">
    <property type="protein sequence ID" value="ENSMUSP00000090245.6"/>
    <property type="gene ID" value="ENSMUSG00000069662.6"/>
</dbReference>
<dbReference type="GeneID" id="17118"/>
<dbReference type="KEGG" id="mmu:17118"/>
<dbReference type="UCSC" id="uc007evg.1">
    <property type="organism name" value="mouse"/>
</dbReference>
<dbReference type="AGR" id="MGI:96907"/>
<dbReference type="CTD" id="4082"/>
<dbReference type="MGI" id="MGI:96907">
    <property type="gene designation" value="Marcks"/>
</dbReference>
<dbReference type="VEuPathDB" id="HostDB:ENSMUSG00000069662"/>
<dbReference type="eggNOG" id="ENOG502RB4V">
    <property type="taxonomic scope" value="Eukaryota"/>
</dbReference>
<dbReference type="GeneTree" id="ENSGT00730000111419"/>
<dbReference type="HOGENOM" id="CLU_073091_0_1_1"/>
<dbReference type="InParanoid" id="P26645"/>
<dbReference type="OMA" id="APFKHEK"/>
<dbReference type="OrthoDB" id="9950867at2759"/>
<dbReference type="TreeFam" id="TF332815"/>
<dbReference type="Reactome" id="R-MMU-399997">
    <property type="pathway name" value="Acetylcholine regulates insulin secretion"/>
</dbReference>
<dbReference type="BioGRID-ORCS" id="17118">
    <property type="hits" value="6 hits in 78 CRISPR screens"/>
</dbReference>
<dbReference type="CD-CODE" id="01CA17F3">
    <property type="entry name" value="Centrosome"/>
</dbReference>
<dbReference type="ChiTaRS" id="Marcks">
    <property type="organism name" value="mouse"/>
</dbReference>
<dbReference type="PRO" id="PR:P26645"/>
<dbReference type="Proteomes" id="UP000000589">
    <property type="component" value="Chromosome 10"/>
</dbReference>
<dbReference type="RNAct" id="P26645">
    <property type="molecule type" value="protein"/>
</dbReference>
<dbReference type="Bgee" id="ENSMUSG00000069662">
    <property type="expression patterns" value="Expressed in rostral migratory stream and 262 other cell types or tissues"/>
</dbReference>
<dbReference type="GO" id="GO:0032432">
    <property type="term" value="C:actin filament bundle"/>
    <property type="evidence" value="ECO:0000314"/>
    <property type="project" value="CAFA"/>
</dbReference>
<dbReference type="GO" id="GO:0005938">
    <property type="term" value="C:cell cortex"/>
    <property type="evidence" value="ECO:0000314"/>
    <property type="project" value="MGI"/>
</dbReference>
<dbReference type="GO" id="GO:0030054">
    <property type="term" value="C:cell junction"/>
    <property type="evidence" value="ECO:0007669"/>
    <property type="project" value="Ensembl"/>
</dbReference>
<dbReference type="GO" id="GO:0005813">
    <property type="term" value="C:centrosome"/>
    <property type="evidence" value="ECO:0000314"/>
    <property type="project" value="MGI"/>
</dbReference>
<dbReference type="GO" id="GO:0005929">
    <property type="term" value="C:cilium"/>
    <property type="evidence" value="ECO:0007669"/>
    <property type="project" value="Ensembl"/>
</dbReference>
<dbReference type="GO" id="GO:0005737">
    <property type="term" value="C:cytoplasm"/>
    <property type="evidence" value="ECO:0000314"/>
    <property type="project" value="MGI"/>
</dbReference>
<dbReference type="GO" id="GO:0005829">
    <property type="term" value="C:cytosol"/>
    <property type="evidence" value="ECO:0007669"/>
    <property type="project" value="Ensembl"/>
</dbReference>
<dbReference type="GO" id="GO:0005783">
    <property type="term" value="C:endoplasmic reticulum"/>
    <property type="evidence" value="ECO:0007669"/>
    <property type="project" value="Ensembl"/>
</dbReference>
<dbReference type="GO" id="GO:0042585">
    <property type="term" value="C:germinal vesicle"/>
    <property type="evidence" value="ECO:0000314"/>
    <property type="project" value="MGI"/>
</dbReference>
<dbReference type="GO" id="GO:0016020">
    <property type="term" value="C:membrane"/>
    <property type="evidence" value="ECO:0000314"/>
    <property type="project" value="MGI"/>
</dbReference>
<dbReference type="GO" id="GO:0016607">
    <property type="term" value="C:nuclear speck"/>
    <property type="evidence" value="ECO:0007669"/>
    <property type="project" value="Ensembl"/>
</dbReference>
<dbReference type="GO" id="GO:0043226">
    <property type="term" value="C:organelle"/>
    <property type="evidence" value="ECO:0000314"/>
    <property type="project" value="MGI"/>
</dbReference>
<dbReference type="GO" id="GO:0005886">
    <property type="term" value="C:plasma membrane"/>
    <property type="evidence" value="ECO:0007669"/>
    <property type="project" value="UniProtKB-SubCell"/>
</dbReference>
<dbReference type="GO" id="GO:0051015">
    <property type="term" value="F:actin filament binding"/>
    <property type="evidence" value="ECO:0000353"/>
    <property type="project" value="CAFA"/>
</dbReference>
<dbReference type="GO" id="GO:0005516">
    <property type="term" value="F:calmodulin binding"/>
    <property type="evidence" value="ECO:0000314"/>
    <property type="project" value="DisProt"/>
</dbReference>
<dbReference type="GO" id="GO:0042802">
    <property type="term" value="F:identical protein binding"/>
    <property type="evidence" value="ECO:0000314"/>
    <property type="project" value="CAFA"/>
</dbReference>
<dbReference type="GO" id="GO:0005080">
    <property type="term" value="F:protein kinase C binding"/>
    <property type="evidence" value="ECO:0000353"/>
    <property type="project" value="BHF-UCL"/>
</dbReference>
<dbReference type="GO" id="GO:0051764">
    <property type="term" value="P:actin crosslink formation"/>
    <property type="evidence" value="ECO:0000314"/>
    <property type="project" value="CAFA"/>
</dbReference>
<dbReference type="GO" id="GO:0051017">
    <property type="term" value="P:actin filament bundle assembly"/>
    <property type="evidence" value="ECO:0000314"/>
    <property type="project" value="CAFA"/>
</dbReference>
<dbReference type="GO" id="GO:0006915">
    <property type="term" value="P:apoptotic process"/>
    <property type="evidence" value="ECO:0000315"/>
    <property type="project" value="MGI"/>
</dbReference>
<dbReference type="GO" id="GO:0007005">
    <property type="term" value="P:mitochondrion organization"/>
    <property type="evidence" value="ECO:0000314"/>
    <property type="project" value="MGI"/>
</dbReference>
<dbReference type="GO" id="GO:0021915">
    <property type="term" value="P:neural tube development"/>
    <property type="evidence" value="ECO:0000315"/>
    <property type="project" value="MGI"/>
</dbReference>
<dbReference type="GO" id="GO:0022008">
    <property type="term" value="P:neurogenesis"/>
    <property type="evidence" value="ECO:0000315"/>
    <property type="project" value="MGI"/>
</dbReference>
<dbReference type="GO" id="GO:0034976">
    <property type="term" value="P:response to endoplasmic reticulum stress"/>
    <property type="evidence" value="ECO:0000314"/>
    <property type="project" value="MGI"/>
</dbReference>
<dbReference type="InterPro" id="IPR002101">
    <property type="entry name" value="MARCKS"/>
</dbReference>
<dbReference type="PANTHER" id="PTHR14353:SF9">
    <property type="entry name" value="MYRISTOYLATED ALANINE-RICH C-KINASE SUBSTRATE"/>
    <property type="match status" value="1"/>
</dbReference>
<dbReference type="PANTHER" id="PTHR14353">
    <property type="entry name" value="MYRISTOYLATED ALANINE-RICH C-KINASE SUBSTRATE MARCKS"/>
    <property type="match status" value="1"/>
</dbReference>
<dbReference type="Pfam" id="PF02063">
    <property type="entry name" value="MARCKS"/>
    <property type="match status" value="1"/>
</dbReference>
<dbReference type="PRINTS" id="PR00963">
    <property type="entry name" value="MARCKS"/>
</dbReference>
<dbReference type="PROSITE" id="PS00826">
    <property type="entry name" value="MARCKS_1"/>
    <property type="match status" value="1"/>
</dbReference>
<dbReference type="PROSITE" id="PS00827">
    <property type="entry name" value="MARCKS_2"/>
    <property type="match status" value="1"/>
</dbReference>
<protein>
    <recommendedName>
        <fullName>Myristoylated alanine-rich C-kinase substrate</fullName>
        <shortName>MARCKS</shortName>
    </recommendedName>
</protein>
<organism>
    <name type="scientific">Mus musculus</name>
    <name type="common">Mouse</name>
    <dbReference type="NCBI Taxonomy" id="10090"/>
    <lineage>
        <taxon>Eukaryota</taxon>
        <taxon>Metazoa</taxon>
        <taxon>Chordata</taxon>
        <taxon>Craniata</taxon>
        <taxon>Vertebrata</taxon>
        <taxon>Euteleostomi</taxon>
        <taxon>Mammalia</taxon>
        <taxon>Eutheria</taxon>
        <taxon>Euarchontoglires</taxon>
        <taxon>Glires</taxon>
        <taxon>Rodentia</taxon>
        <taxon>Myomorpha</taxon>
        <taxon>Muroidea</taxon>
        <taxon>Muridae</taxon>
        <taxon>Murinae</taxon>
        <taxon>Mus</taxon>
        <taxon>Mus</taxon>
    </lineage>
</organism>
<sequence length="309" mass="29661">MGAQFSKTAAKGEATAERPGEAAVASSPSKANGQENGHVKVNGDASPAAAEPGAKEELQANGSAPAADKEEPASGSAATPAAAEKDEAAAATEPGAGAADKEAAEAEPAEPSSPAAEAEGASASSTSSPKAEDGAAPSPSSETPKKKKKRFSFKKSFKLSGFSFKKSKKESGEGAEAEGATAEGAKDEAAAAAGGEGAAAPGEQAGGAGAEGAAGGEPREAEAAEPEQPEQPEQPAAEEPQAEEQSEAAGEKAEEPAPGATAGDASSAAGPEQEAPAATDEAAASAAPAASPEPQPECSPEAPPAPTAE</sequence>
<evidence type="ECO:0000250" key="1">
    <source>
        <dbReference type="UniProtKB" id="P12624"/>
    </source>
</evidence>
<evidence type="ECO:0000250" key="2">
    <source>
        <dbReference type="UniProtKB" id="P29966"/>
    </source>
</evidence>
<evidence type="ECO:0000250" key="3">
    <source>
        <dbReference type="UniProtKB" id="P30009"/>
    </source>
</evidence>
<evidence type="ECO:0000256" key="4">
    <source>
        <dbReference type="SAM" id="MobiDB-lite"/>
    </source>
</evidence>
<evidence type="ECO:0000269" key="5">
    <source>
    </source>
</evidence>
<evidence type="ECO:0000269" key="6">
    <source>
    </source>
</evidence>
<evidence type="ECO:0000269" key="7">
    <source>
    </source>
</evidence>
<evidence type="ECO:0000269" key="8">
    <source>
    </source>
</evidence>
<evidence type="ECO:0000269" key="9">
    <source>
    </source>
</evidence>
<evidence type="ECO:0000269" key="10">
    <source>
    </source>
</evidence>
<evidence type="ECO:0000269" key="11">
    <source>
    </source>
</evidence>
<evidence type="ECO:0000269" key="12">
    <source>
    </source>
</evidence>
<evidence type="ECO:0000305" key="13"/>
<evidence type="ECO:0007744" key="14">
    <source>
    </source>
</evidence>
<evidence type="ECO:0007744" key="15">
    <source>
    </source>
</evidence>
<evidence type="ECO:0007744" key="16">
    <source>
    </source>
</evidence>
<evidence type="ECO:0007829" key="17">
    <source>
        <dbReference type="PDB" id="1IWQ"/>
    </source>
</evidence>
<gene>
    <name type="primary">Marcks</name>
    <name type="synonym">Macs</name>
</gene>
<comment type="function">
    <text evidence="2 3 7 8 9 11">Membrane-associated protein that plays a role in the structural modulation of the actin cytoskeleton, chemotaxis, motility, cell adhesion, phagocytosis, and exocytosis through lipid sequestering and/or protein docking to membranes. Thus, exerts an influence on a plethora of physiological processes, such as embryonic development, tissue regeneration, neuronal plasticity, and inflammation (PubMed:30185885, PubMed:30655546, PubMed:8700893). Sequesters phosphatidylinositol 4,5-bisphosphate (PIP2) at lipid rafts in the plasma membrane of quiescent cells, an action reversed by protein kinase C, ultimately inhibiting exocytosis (By similarity). During inflammation, promotes the migration of inflammatory cells and the secretion of cytokines such as tumor necrosis factor (TNF), particularly in macrophages (PubMed:20205598). Plays an essential role in bacteria-induced intracellular reactive oxygen species (ROS) formation in the monocytic cell type. Participates in the regulation of neurite initiation and outgrowth by interacting with components of cellular machinery including CDC42 that regulates cell shape and process extension through modulation of the cytoskeleton (PubMed:30185885). Also plays a role in axon development by mediating docking and fusion of RAB10-positive vesicles with the plasma membrane (By similarity).</text>
</comment>
<comment type="subunit">
    <text evidence="3 5 8">Interacts with CDC42 (PubMed:30185885). Interacts with GTP-bound form of RAB10 (By similarity). Interacts with calmodulin/CALM1 (PubMed:12577052).</text>
</comment>
<comment type="interaction">
    <interactant intactId="EBI-911805">
        <id>P26645</id>
    </interactant>
    <interactant intactId="EBI-397435">
        <id>P62158</id>
        <label>CALM3</label>
    </interactant>
    <organismsDiffer>true</organismsDiffer>
    <experiments>2</experiments>
</comment>
<comment type="subcellular location">
    <subcellularLocation>
        <location evidence="8">Cell membrane</location>
        <topology evidence="8">Lipid-anchor</topology>
    </subcellularLocation>
    <subcellularLocation>
        <location evidence="2">Cytoplasm</location>
        <location evidence="2">Cytoskeleton</location>
    </subcellularLocation>
    <subcellularLocation>
        <location evidence="8 9">Cytoplasm</location>
    </subcellularLocation>
    <text evidence="2">PKC-dependent phosphorylation displaces MARCKS from the cell membrane and subsequent dephosphorylation is accompanied by its reassociation with the membrane.</text>
</comment>
<comment type="tissue specificity">
    <text evidence="6">Brain, spleen, less in kidney and heart, and very low levels in liver.</text>
</comment>
<comment type="induction">
    <text evidence="6">By lipopolysaccharides (LPS).</text>
</comment>
<comment type="PTM">
    <text evidence="9">Acetylated at Lys-165 by KAT5; acetylation is required for its subsequent phosphorylation. Deacetylated by SIRT2.</text>
</comment>
<comment type="PTM">
    <text evidence="2">Phosphorylation by PKC displaces MARCKS from the membrane. It also inhibits the F-actin cross-linking activity. PKC-mediated phosphorylation increases 4 to 5-fold upon TNF-alpha or LPS induction.</text>
</comment>
<comment type="PTM">
    <text evidence="2">Myristoylated. A proper myristoylation is essential for the proper distribution to the plasma membrane.</text>
</comment>
<comment type="PTM">
    <text evidence="10 12">Phosphorylation by PKC displaces MARCKS from the membrane. It also inhibits the F-actin cross-linking activity.</text>
</comment>
<comment type="disruption phenotype">
    <text evidence="11">Most of deletion mutant embryos display an abnormal brain development with defects including open cranial neural tubes (exencephaly), open spinal neural tubes (spina bifida) and tail flexion, and the pups die within several hours after birth.</text>
</comment>
<comment type="similarity">
    <text evidence="13">Belongs to the MARCKS family.</text>
</comment>